<comment type="function">
    <text evidence="1">Beta-glucosidases are one of a number of cellulolytic enzymes involved in the degradation of cellulosic biomass. Catalyzes the last step releasing glucose from the inhibitory cellobiose (By similarity).</text>
</comment>
<comment type="catalytic activity">
    <reaction>
        <text>Hydrolysis of terminal, non-reducing beta-D-glucosyl residues with release of beta-D-glucose.</text>
        <dbReference type="EC" id="3.2.1.21"/>
    </reaction>
</comment>
<comment type="pathway">
    <text>Glycan metabolism; cellulose degradation.</text>
</comment>
<comment type="subcellular location">
    <subcellularLocation>
        <location evidence="1">Secreted</location>
    </subcellularLocation>
</comment>
<comment type="similarity">
    <text evidence="3">Belongs to the glycosyl hydrolase 3 family.</text>
</comment>
<organism>
    <name type="scientific">Aspergillus fumigatus (strain CBS 144.89 / FGSC A1163 / CEA10)</name>
    <name type="common">Neosartorya fumigata</name>
    <dbReference type="NCBI Taxonomy" id="451804"/>
    <lineage>
        <taxon>Eukaryota</taxon>
        <taxon>Fungi</taxon>
        <taxon>Dikarya</taxon>
        <taxon>Ascomycota</taxon>
        <taxon>Pezizomycotina</taxon>
        <taxon>Eurotiomycetes</taxon>
        <taxon>Eurotiomycetidae</taxon>
        <taxon>Eurotiales</taxon>
        <taxon>Aspergillaceae</taxon>
        <taxon>Aspergillus</taxon>
        <taxon>Aspergillus subgen. Fumigati</taxon>
    </lineage>
</organism>
<dbReference type="EC" id="3.2.1.21"/>
<dbReference type="EMBL" id="DS499601">
    <property type="protein sequence ID" value="EDP48455.1"/>
    <property type="molecule type" value="Genomic_DNA"/>
</dbReference>
<dbReference type="SMR" id="B0YB65"/>
<dbReference type="GlyCosmos" id="B0YB65">
    <property type="glycosylation" value="3 sites, No reported glycans"/>
</dbReference>
<dbReference type="EnsemblFungi" id="EDP48455">
    <property type="protein sequence ID" value="EDP48455"/>
    <property type="gene ID" value="AFUB_091720"/>
</dbReference>
<dbReference type="VEuPathDB" id="FungiDB:AFUB_091720"/>
<dbReference type="HOGENOM" id="CLU_004542_2_3_1"/>
<dbReference type="OrthoDB" id="51298at5052"/>
<dbReference type="PhylomeDB" id="B0YB65"/>
<dbReference type="UniPathway" id="UPA00696"/>
<dbReference type="Proteomes" id="UP000001699">
    <property type="component" value="Unassembled WGS sequence"/>
</dbReference>
<dbReference type="GO" id="GO:0005576">
    <property type="term" value="C:extracellular region"/>
    <property type="evidence" value="ECO:0007669"/>
    <property type="project" value="UniProtKB-SubCell"/>
</dbReference>
<dbReference type="GO" id="GO:0008422">
    <property type="term" value="F:beta-glucosidase activity"/>
    <property type="evidence" value="ECO:0007669"/>
    <property type="project" value="UniProtKB-EC"/>
</dbReference>
<dbReference type="GO" id="GO:0030245">
    <property type="term" value="P:cellulose catabolic process"/>
    <property type="evidence" value="ECO:0007669"/>
    <property type="project" value="UniProtKB-UniPathway"/>
</dbReference>
<dbReference type="FunFam" id="2.60.40.10:FF:000757">
    <property type="entry name" value="Beta-glucosidase G"/>
    <property type="match status" value="1"/>
</dbReference>
<dbReference type="FunFam" id="3.20.20.300:FF:000002">
    <property type="entry name" value="Probable beta-glucosidase"/>
    <property type="match status" value="1"/>
</dbReference>
<dbReference type="FunFam" id="3.40.50.1700:FF:000003">
    <property type="entry name" value="Probable beta-glucosidase"/>
    <property type="match status" value="1"/>
</dbReference>
<dbReference type="Gene3D" id="3.40.50.1700">
    <property type="entry name" value="Glycoside hydrolase family 3 C-terminal domain"/>
    <property type="match status" value="1"/>
</dbReference>
<dbReference type="Gene3D" id="3.20.20.300">
    <property type="entry name" value="Glycoside hydrolase, family 3, N-terminal domain"/>
    <property type="match status" value="1"/>
</dbReference>
<dbReference type="Gene3D" id="2.60.40.10">
    <property type="entry name" value="Immunoglobulins"/>
    <property type="match status" value="1"/>
</dbReference>
<dbReference type="InterPro" id="IPR050288">
    <property type="entry name" value="Cellulose_deg_GH3"/>
</dbReference>
<dbReference type="InterPro" id="IPR026891">
    <property type="entry name" value="Fn3-like"/>
</dbReference>
<dbReference type="InterPro" id="IPR002772">
    <property type="entry name" value="Glyco_hydro_3_C"/>
</dbReference>
<dbReference type="InterPro" id="IPR036881">
    <property type="entry name" value="Glyco_hydro_3_C_sf"/>
</dbReference>
<dbReference type="InterPro" id="IPR001764">
    <property type="entry name" value="Glyco_hydro_3_N"/>
</dbReference>
<dbReference type="InterPro" id="IPR036962">
    <property type="entry name" value="Glyco_hydro_3_N_sf"/>
</dbReference>
<dbReference type="InterPro" id="IPR017853">
    <property type="entry name" value="Glycoside_hydrolase_SF"/>
</dbReference>
<dbReference type="InterPro" id="IPR013783">
    <property type="entry name" value="Ig-like_fold"/>
</dbReference>
<dbReference type="PANTHER" id="PTHR42715">
    <property type="entry name" value="BETA-GLUCOSIDASE"/>
    <property type="match status" value="1"/>
</dbReference>
<dbReference type="PANTHER" id="PTHR42715:SF28">
    <property type="entry name" value="BETA-GLUCOSIDASE L-RELATED"/>
    <property type="match status" value="1"/>
</dbReference>
<dbReference type="Pfam" id="PF14310">
    <property type="entry name" value="Fn3-like"/>
    <property type="match status" value="1"/>
</dbReference>
<dbReference type="Pfam" id="PF00933">
    <property type="entry name" value="Glyco_hydro_3"/>
    <property type="match status" value="1"/>
</dbReference>
<dbReference type="Pfam" id="PF01915">
    <property type="entry name" value="Glyco_hydro_3_C"/>
    <property type="match status" value="1"/>
</dbReference>
<dbReference type="PRINTS" id="PR00133">
    <property type="entry name" value="GLHYDRLASE3"/>
</dbReference>
<dbReference type="SMART" id="SM01217">
    <property type="entry name" value="Fn3_like"/>
    <property type="match status" value="1"/>
</dbReference>
<dbReference type="SUPFAM" id="SSF51445">
    <property type="entry name" value="(Trans)glycosidases"/>
    <property type="match status" value="1"/>
</dbReference>
<dbReference type="SUPFAM" id="SSF52279">
    <property type="entry name" value="Beta-D-glucan exohydrolase, C-terminal domain"/>
    <property type="match status" value="1"/>
</dbReference>
<name>BGLL_ASPFC</name>
<feature type="signal peptide" evidence="2">
    <location>
        <begin position="1"/>
        <end position="17"/>
    </location>
</feature>
<feature type="chain" id="PRO_0000394899" description="Probable beta-glucosidase L">
    <location>
        <begin position="18"/>
        <end position="739"/>
    </location>
</feature>
<feature type="active site" evidence="1">
    <location>
        <position position="252"/>
    </location>
</feature>
<feature type="glycosylation site" description="N-linked (GlcNAc...) asparagine" evidence="2">
    <location>
        <position position="40"/>
    </location>
</feature>
<feature type="glycosylation site" description="N-linked (GlcNAc...) asparagine" evidence="2">
    <location>
        <position position="224"/>
    </location>
</feature>
<feature type="glycosylation site" description="N-linked (GlcNAc...) asparagine" evidence="2">
    <location>
        <position position="398"/>
    </location>
</feature>
<sequence>MQTLFLSLLAAAVTVHAYGSGGSNWDQAYSRAKDALQKLNQTEKVGLVTGVKWMGGPCVGNTYKPESIDYPSLCLQDSPLGIRFANPVTAFPAGINAGATWDTQLLYARGAAMGAEAKGLGIHVQLGPVAGPLGKNPNGGRNWEGFSVDPYLSGVAMEKTIRGMQDSGVQACAKHWLGNEQEHYRDTISSNIGDRAAHELYVWPFMDAVKAGVASVMCSYNKVNGTWACESDALNNKLMKEELGFPGYIMSDWNAQHSTVNSAVSGLDMTMPGSDFSNPPGSIFWGSNLEAAVADGSVPQSRLDDMVTRILAAWYLVGQDQGYPPVAFSSWNGGKANVDVTADHGTVARAVARDSIVLLKNGHGTLPLRKPKSLAIVGSDAIVNPAGPNACSDRGCNNGTLAMGWGSGTAEFPYLVGPLDAIQKRAAADGTKIVPSTTDDPTAGASAAAAAETAIVFINSDSGEGYITVEGNLGDRNNLDPWHNGNELVKAVAAASKNVIVVIHSVGPIILETILAQPSVKAIVWAGLPGQESGNALVDVIYGDTTPSGKLPYTIAKQAADYGASWINAETDDFPEGLYVDYRHFDAKGIAPRYEFGYGLSYTTFKYSGLWVNMDASAGAANGQVVPGGPADLFEVVGQVSVSVRNNGRVAGAEVAQLYLGLPDSAPATPPKQLRGFQKLMLQPGQTGRATFKLTRRDLSYWDVQQQKWVVPSGTFKVYVGSSSRDIREEGSFRVRRGW</sequence>
<gene>
    <name type="primary">bglL</name>
    <name type="ORF">AFUB_091720</name>
</gene>
<evidence type="ECO:0000250" key="1"/>
<evidence type="ECO:0000255" key="2"/>
<evidence type="ECO:0000305" key="3"/>
<protein>
    <recommendedName>
        <fullName>Probable beta-glucosidase L</fullName>
        <ecNumber>3.2.1.21</ecNumber>
    </recommendedName>
    <alternativeName>
        <fullName>Beta-D-glucoside glucohydrolase L</fullName>
    </alternativeName>
    <alternativeName>
        <fullName>Cellobiase L</fullName>
    </alternativeName>
    <alternativeName>
        <fullName>Gentiobiase L</fullName>
    </alternativeName>
</protein>
<proteinExistence type="inferred from homology"/>
<accession>B0YB65</accession>
<reference key="1">
    <citation type="journal article" date="2008" name="PLoS Genet.">
        <title>Genomic islands in the pathogenic filamentous fungus Aspergillus fumigatus.</title>
        <authorList>
            <person name="Fedorova N.D."/>
            <person name="Khaldi N."/>
            <person name="Joardar V.S."/>
            <person name="Maiti R."/>
            <person name="Amedeo P."/>
            <person name="Anderson M.J."/>
            <person name="Crabtree J."/>
            <person name="Silva J.C."/>
            <person name="Badger J.H."/>
            <person name="Albarraq A."/>
            <person name="Angiuoli S."/>
            <person name="Bussey H."/>
            <person name="Bowyer P."/>
            <person name="Cotty P.J."/>
            <person name="Dyer P.S."/>
            <person name="Egan A."/>
            <person name="Galens K."/>
            <person name="Fraser-Liggett C.M."/>
            <person name="Haas B.J."/>
            <person name="Inman J.M."/>
            <person name="Kent R."/>
            <person name="Lemieux S."/>
            <person name="Malavazi I."/>
            <person name="Orvis J."/>
            <person name="Roemer T."/>
            <person name="Ronning C.M."/>
            <person name="Sundaram J.P."/>
            <person name="Sutton G."/>
            <person name="Turner G."/>
            <person name="Venter J.C."/>
            <person name="White O.R."/>
            <person name="Whitty B.R."/>
            <person name="Youngman P."/>
            <person name="Wolfe K.H."/>
            <person name="Goldman G.H."/>
            <person name="Wortman J.R."/>
            <person name="Jiang B."/>
            <person name="Denning D.W."/>
            <person name="Nierman W.C."/>
        </authorList>
    </citation>
    <scope>NUCLEOTIDE SEQUENCE [LARGE SCALE GENOMIC DNA]</scope>
    <source>
        <strain>CBS 144.89 / FGSC A1163 / CEA10</strain>
    </source>
</reference>
<keyword id="KW-0119">Carbohydrate metabolism</keyword>
<keyword id="KW-0136">Cellulose degradation</keyword>
<keyword id="KW-0325">Glycoprotein</keyword>
<keyword id="KW-0326">Glycosidase</keyword>
<keyword id="KW-0378">Hydrolase</keyword>
<keyword id="KW-0624">Polysaccharide degradation</keyword>
<keyword id="KW-0964">Secreted</keyword>
<keyword id="KW-0732">Signal</keyword>